<evidence type="ECO:0000255" key="1">
    <source>
        <dbReference type="HAMAP-Rule" id="MF_00326"/>
    </source>
</evidence>
<evidence type="ECO:0000269" key="2">
    <source>
    </source>
</evidence>
<evidence type="ECO:0000269" key="3">
    <source>
    </source>
</evidence>
<evidence type="ECO:0000305" key="4"/>
<evidence type="ECO:0007829" key="5">
    <source>
        <dbReference type="PDB" id="5GIP"/>
    </source>
</evidence>
<organism>
    <name type="scientific">Saccharolobus solfataricus (strain ATCC 35092 / DSM 1617 / JCM 11322 / P2)</name>
    <name type="common">Sulfolobus solfataricus</name>
    <dbReference type="NCBI Taxonomy" id="273057"/>
    <lineage>
        <taxon>Archaea</taxon>
        <taxon>Thermoproteota</taxon>
        <taxon>Thermoprotei</taxon>
        <taxon>Sulfolobales</taxon>
        <taxon>Sulfolobaceae</taxon>
        <taxon>Saccharolobus</taxon>
    </lineage>
</organism>
<protein>
    <recommendedName>
        <fullName evidence="1">Large ribosomal subunit protein eL8</fullName>
    </recommendedName>
    <alternativeName>
        <fullName evidence="4">50S ribosomal protein L7Ae</fullName>
    </alternativeName>
    <alternativeName>
        <fullName evidence="1">Ribosomal protein L8e</fullName>
    </alternativeName>
</protein>
<keyword id="KW-0002">3D-structure</keyword>
<keyword id="KW-0963">Cytoplasm</keyword>
<keyword id="KW-1185">Reference proteome</keyword>
<keyword id="KW-0687">Ribonucleoprotein</keyword>
<keyword id="KW-0689">Ribosomal protein</keyword>
<keyword id="KW-0694">RNA-binding</keyword>
<keyword id="KW-0699">rRNA-binding</keyword>
<keyword id="KW-0819">tRNA processing</keyword>
<reference key="1">
    <citation type="journal article" date="1996" name="Mol. Microbiol.">
        <title>Organizational characteristics and information content of an archaeal genome: 156 kb of sequence from Sulfolobus solfataricus P2.</title>
        <authorList>
            <person name="Sensen C.W."/>
            <person name="Klenk H.-P."/>
            <person name="Singh R.K."/>
            <person name="Allard G."/>
            <person name="Chan C.C.-Y."/>
            <person name="Liu Q.Y."/>
            <person name="Penny S.L."/>
            <person name="Young F."/>
            <person name="Schenk M.E."/>
            <person name="Gaasterland T."/>
            <person name="Doolittle W.F."/>
            <person name="Ragan M.A."/>
            <person name="Charlebois R.L."/>
        </authorList>
    </citation>
    <scope>NUCLEOTIDE SEQUENCE [GENOMIC DNA]</scope>
    <source>
        <strain>ATCC 35092 / DSM 1617 / JCM 11322 / P2</strain>
    </source>
</reference>
<reference key="2">
    <citation type="journal article" date="2001" name="Proc. Natl. Acad. Sci. U.S.A.">
        <title>The complete genome of the crenarchaeon Sulfolobus solfataricus P2.</title>
        <authorList>
            <person name="She Q."/>
            <person name="Singh R.K."/>
            <person name="Confalonieri F."/>
            <person name="Zivanovic Y."/>
            <person name="Allard G."/>
            <person name="Awayez M.J."/>
            <person name="Chan-Weiher C.C.-Y."/>
            <person name="Clausen I.G."/>
            <person name="Curtis B.A."/>
            <person name="De Moors A."/>
            <person name="Erauso G."/>
            <person name="Fletcher C."/>
            <person name="Gordon P.M.K."/>
            <person name="Heikamp-de Jong I."/>
            <person name="Jeffries A.C."/>
            <person name="Kozera C.J."/>
            <person name="Medina N."/>
            <person name="Peng X."/>
            <person name="Thi-Ngoc H.P."/>
            <person name="Redder P."/>
            <person name="Schenk M.E."/>
            <person name="Theriault C."/>
            <person name="Tolstrup N."/>
            <person name="Charlebois R.L."/>
            <person name="Doolittle W.F."/>
            <person name="Duguet M."/>
            <person name="Gaasterland T."/>
            <person name="Garrett R.A."/>
            <person name="Ragan M.A."/>
            <person name="Sensen C.W."/>
            <person name="Van der Oost J."/>
        </authorList>
    </citation>
    <scope>NUCLEOTIDE SEQUENCE [LARGE SCALE GENOMIC DNA]</scope>
    <source>
        <strain>ATCC 35092 / DSM 1617 / JCM 11322 / P2</strain>
    </source>
</reference>
<reference key="3">
    <citation type="journal article" date="2009" name="Nucleic Acids Res.">
        <title>Function and ribosomal localization of aIF6, a translational regulator shared by archaea and eukarya.</title>
        <authorList>
            <person name="Benelli D."/>
            <person name="Marzi S."/>
            <person name="Mancone C."/>
            <person name="Alonzi T."/>
            <person name="la Teana A."/>
            <person name="Londei P."/>
        </authorList>
    </citation>
    <scope>SUBUNIT</scope>
    <scope>SUBCELLULAR LOCATION</scope>
    <scope>INDUCTION</scope>
</reference>
<reference key="4">
    <citation type="journal article" date="2009" name="Proc. Natl. Acad. Sci. U.S.A.">
        <title>Structural organization of box C/D RNA-guided RNA methyltransferase.</title>
        <authorList>
            <person name="Ye K."/>
            <person name="Jia R."/>
            <person name="Lin J."/>
            <person name="Ju M."/>
            <person name="Peng J."/>
            <person name="Xu A."/>
            <person name="Zhang L."/>
        </authorList>
    </citation>
    <scope>X-RAY CRYSTALLOGRAPHY (4.01 ANGSTROMS) IN COMPLEX WITH RNA; S-NOP5 AND FLPA</scope>
    <scope>SUBUNIT</scope>
</reference>
<feature type="chain" id="PRO_0000136806" description="Large ribosomal subunit protein eL8">
    <location>
        <begin position="1"/>
        <end position="127"/>
    </location>
</feature>
<feature type="helix" evidence="5">
    <location>
        <begin position="13"/>
        <end position="29"/>
    </location>
</feature>
<feature type="strand" evidence="5">
    <location>
        <begin position="30"/>
        <end position="35"/>
    </location>
</feature>
<feature type="helix" evidence="5">
    <location>
        <begin position="36"/>
        <end position="44"/>
    </location>
</feature>
<feature type="strand" evidence="5">
    <location>
        <begin position="49"/>
        <end position="56"/>
    </location>
</feature>
<feature type="helix" evidence="5">
    <location>
        <begin position="60"/>
        <end position="63"/>
    </location>
</feature>
<feature type="helix" evidence="5">
    <location>
        <begin position="66"/>
        <end position="72"/>
    </location>
</feature>
<feature type="strand" evidence="5">
    <location>
        <begin position="77"/>
        <end position="81"/>
    </location>
</feature>
<feature type="helix" evidence="5">
    <location>
        <begin position="83"/>
        <end position="90"/>
    </location>
</feature>
<feature type="strand" evidence="5">
    <location>
        <begin position="97"/>
        <end position="103"/>
    </location>
</feature>
<feature type="helix" evidence="5">
    <location>
        <begin position="108"/>
        <end position="121"/>
    </location>
</feature>
<comment type="function">
    <text>Multifunctional RNA-binding protein that recognizes the K-turn motif in ribosomal RNA, the RNA component of RNase P, box H/ACA, box C/D and box C'/D' sRNAs.</text>
</comment>
<comment type="subunit">
    <text evidence="2 3">Part of the 50S ribosomal subunit. Component of box C/D small ribonucleoprotein (sRNP) particles that contain rpl7ae, FlpA and nop5, plus a guide RNA. These sRNP particles form homodimers, giving rise to an asymmetric holoenzyme. Probably part of the RNase P complex.</text>
</comment>
<comment type="subcellular location">
    <subcellularLocation>
        <location evidence="1 2">Cytoplasm</location>
    </subcellularLocation>
    <text>Found free in the cytoplasm and associated with the 50S ribosomal subunit.</text>
</comment>
<comment type="induction">
    <text evidence="2">Constitutuively expressed (at protein level).</text>
</comment>
<comment type="similarity">
    <text evidence="1">Belongs to the eukaryotic ribosomal protein eL8 family.</text>
</comment>
<comment type="sequence caution" evidence="4">
    <conflict type="erroneous initiation">
        <sequence resource="EMBL-CDS" id="AAK40449"/>
    </conflict>
    <text>Extended N-terminus.</text>
</comment>
<comment type="sequence caution" evidence="4">
    <conflict type="erroneous initiation">
        <sequence resource="EMBL-CDS" id="CAA69560"/>
    </conflict>
    <text>Extended N-terminus.</text>
</comment>
<sequence>MSKASYVKFEVPQDLADKVLEAVRKAKESGKIKKGTNETTKAVERGQAKLVIIAEDVQPEEIVAHLPLLCDEKKIPYVYVSSKKALGEACGLQVATASAAILEPGEAKDLVDEIIKRVNEIKGKTSS</sequence>
<gene>
    <name evidence="1" type="primary">rpl7ae</name>
    <name type="ordered locus">SSO0091</name>
    <name type="ORF">C04_031</name>
</gene>
<name>RL7A_SACS2</name>
<dbReference type="EMBL" id="Y08257">
    <property type="protein sequence ID" value="CAA69560.1"/>
    <property type="status" value="ALT_INIT"/>
    <property type="molecule type" value="Genomic_DNA"/>
</dbReference>
<dbReference type="EMBL" id="AE006641">
    <property type="protein sequence ID" value="AAK40449.1"/>
    <property type="status" value="ALT_INIT"/>
    <property type="molecule type" value="Genomic_DNA"/>
</dbReference>
<dbReference type="PIR" id="S75397">
    <property type="entry name" value="S75397"/>
</dbReference>
<dbReference type="RefSeq" id="WP_009988903.1">
    <property type="nucleotide sequence ID" value="NC_002754.1"/>
</dbReference>
<dbReference type="PDB" id="3ID5">
    <property type="method" value="X-ray"/>
    <property type="resolution" value="4.01 A"/>
    <property type="chains" value="C/G=1-127"/>
</dbReference>
<dbReference type="PDB" id="5GIN">
    <property type="method" value="X-ray"/>
    <property type="resolution" value="3.31 A"/>
    <property type="chains" value="C/D/L=3-127"/>
</dbReference>
<dbReference type="PDB" id="5GIO">
    <property type="method" value="X-ray"/>
    <property type="resolution" value="3.60 A"/>
    <property type="chains" value="C/D/L=3-127"/>
</dbReference>
<dbReference type="PDB" id="5GIP">
    <property type="method" value="X-ray"/>
    <property type="resolution" value="3.13 A"/>
    <property type="chains" value="C/D/M/N=3-127"/>
</dbReference>
<dbReference type="PDB" id="5JPQ">
    <property type="method" value="EM"/>
    <property type="resolution" value="7.30 A"/>
    <property type="chains" value="U/V=1-127"/>
</dbReference>
<dbReference type="PDB" id="9FHL">
    <property type="method" value="EM"/>
    <property type="resolution" value="2.50 A"/>
    <property type="chains" value="3=1-127"/>
</dbReference>
<dbReference type="PDB" id="9FRA">
    <property type="method" value="EM"/>
    <property type="resolution" value="2.80 A"/>
    <property type="chains" value="3=1-127"/>
</dbReference>
<dbReference type="PDB" id="9FRK">
    <property type="method" value="EM"/>
    <property type="resolution" value="3.00 A"/>
    <property type="chains" value="3=1-127"/>
</dbReference>
<dbReference type="PDB" id="9FRL">
    <property type="method" value="EM"/>
    <property type="resolution" value="2.97 A"/>
    <property type="chains" value="3=1-127"/>
</dbReference>
<dbReference type="PDB" id="9FS6">
    <property type="method" value="EM"/>
    <property type="resolution" value="2.90 A"/>
    <property type="chains" value="3=1-127"/>
</dbReference>
<dbReference type="PDB" id="9FS8">
    <property type="method" value="EM"/>
    <property type="resolution" value="3.70 A"/>
    <property type="chains" value="3=1-127"/>
</dbReference>
<dbReference type="PDB" id="9FSF">
    <property type="method" value="EM"/>
    <property type="resolution" value="2.80 A"/>
    <property type="chains" value="3=1-127"/>
</dbReference>
<dbReference type="PDB" id="9FY0">
    <property type="method" value="EM"/>
    <property type="resolution" value="2.90 A"/>
    <property type="chains" value="3=1-127"/>
</dbReference>
<dbReference type="PDBsum" id="3ID5"/>
<dbReference type="PDBsum" id="5GIN"/>
<dbReference type="PDBsum" id="5GIO"/>
<dbReference type="PDBsum" id="5GIP"/>
<dbReference type="PDBsum" id="5JPQ"/>
<dbReference type="PDBsum" id="9FHL"/>
<dbReference type="PDBsum" id="9FRA"/>
<dbReference type="PDBsum" id="9FRK"/>
<dbReference type="PDBsum" id="9FRL"/>
<dbReference type="PDBsum" id="9FS6"/>
<dbReference type="PDBsum" id="9FS8"/>
<dbReference type="PDBsum" id="9FSF"/>
<dbReference type="PDBsum" id="9FY0"/>
<dbReference type="EMDB" id="EMD-50445"/>
<dbReference type="EMDB" id="EMD-50709"/>
<dbReference type="EMDB" id="EMD-50716"/>
<dbReference type="EMDB" id="EMD-50717"/>
<dbReference type="EMDB" id="EMD-50724"/>
<dbReference type="EMDB" id="EMD-50725"/>
<dbReference type="EMDB" id="EMD-50727"/>
<dbReference type="EMDB" id="EMD-50854"/>
<dbReference type="SMR" id="P55858"/>
<dbReference type="DIP" id="DIP-48940N"/>
<dbReference type="FunCoup" id="P55858">
    <property type="interactions" value="231"/>
</dbReference>
<dbReference type="IntAct" id="P55858">
    <property type="interactions" value="1"/>
</dbReference>
<dbReference type="STRING" id="273057.SSO0091"/>
<dbReference type="PaxDb" id="273057-SSO0091"/>
<dbReference type="EnsemblBacteria" id="AAK40449">
    <property type="protein sequence ID" value="AAK40449"/>
    <property type="gene ID" value="SSO0091"/>
</dbReference>
<dbReference type="GeneID" id="44129051"/>
<dbReference type="KEGG" id="sso:SSO0091"/>
<dbReference type="PATRIC" id="fig|273057.12.peg.89"/>
<dbReference type="eggNOG" id="arCOG01751">
    <property type="taxonomic scope" value="Archaea"/>
</dbReference>
<dbReference type="HOGENOM" id="CLU_084513_4_0_2"/>
<dbReference type="InParanoid" id="P55858"/>
<dbReference type="PhylomeDB" id="P55858"/>
<dbReference type="EvolutionaryTrace" id="P55858"/>
<dbReference type="Proteomes" id="UP000001974">
    <property type="component" value="Chromosome"/>
</dbReference>
<dbReference type="GO" id="GO:0005737">
    <property type="term" value="C:cytoplasm"/>
    <property type="evidence" value="ECO:0007669"/>
    <property type="project" value="UniProtKB-SubCell"/>
</dbReference>
<dbReference type="GO" id="GO:1990904">
    <property type="term" value="C:ribonucleoprotein complex"/>
    <property type="evidence" value="ECO:0007669"/>
    <property type="project" value="UniProtKB-KW"/>
</dbReference>
<dbReference type="GO" id="GO:0005840">
    <property type="term" value="C:ribosome"/>
    <property type="evidence" value="ECO:0007669"/>
    <property type="project" value="UniProtKB-KW"/>
</dbReference>
<dbReference type="GO" id="GO:0004526">
    <property type="term" value="F:ribonuclease P activity"/>
    <property type="evidence" value="ECO:0007669"/>
    <property type="project" value="UniProtKB-UniRule"/>
</dbReference>
<dbReference type="GO" id="GO:0019843">
    <property type="term" value="F:rRNA binding"/>
    <property type="evidence" value="ECO:0007669"/>
    <property type="project" value="UniProtKB-KW"/>
</dbReference>
<dbReference type="GO" id="GO:0003735">
    <property type="term" value="F:structural constituent of ribosome"/>
    <property type="evidence" value="ECO:0007669"/>
    <property type="project" value="InterPro"/>
</dbReference>
<dbReference type="GO" id="GO:0042254">
    <property type="term" value="P:ribosome biogenesis"/>
    <property type="evidence" value="ECO:0007669"/>
    <property type="project" value="InterPro"/>
</dbReference>
<dbReference type="GO" id="GO:0006412">
    <property type="term" value="P:translation"/>
    <property type="evidence" value="ECO:0007669"/>
    <property type="project" value="UniProtKB-UniRule"/>
</dbReference>
<dbReference type="GO" id="GO:0001682">
    <property type="term" value="P:tRNA 5'-leader removal"/>
    <property type="evidence" value="ECO:0007669"/>
    <property type="project" value="UniProtKB-UniRule"/>
</dbReference>
<dbReference type="FunFam" id="3.30.1330.30:FF:000020">
    <property type="entry name" value="50S ribosomal protein L7Ae"/>
    <property type="match status" value="1"/>
</dbReference>
<dbReference type="Gene3D" id="3.30.1330.30">
    <property type="match status" value="1"/>
</dbReference>
<dbReference type="HAMAP" id="MF_00326">
    <property type="entry name" value="Ribosomal_eL8"/>
    <property type="match status" value="1"/>
</dbReference>
<dbReference type="InterPro" id="IPR050257">
    <property type="entry name" value="eL8/uL1-like"/>
</dbReference>
<dbReference type="InterPro" id="IPR029064">
    <property type="entry name" value="Ribosomal_eL30-like_sf"/>
</dbReference>
<dbReference type="InterPro" id="IPR004037">
    <property type="entry name" value="Ribosomal_eL8-like_CS"/>
</dbReference>
<dbReference type="InterPro" id="IPR004038">
    <property type="entry name" value="Ribosomal_eL8/eL30/eS12/Gad45"/>
</dbReference>
<dbReference type="InterPro" id="IPR018492">
    <property type="entry name" value="Ribosomal_eL8/Nhp2"/>
</dbReference>
<dbReference type="InterPro" id="IPR022481">
    <property type="entry name" value="Ribosomal_eL8_arc"/>
</dbReference>
<dbReference type="NCBIfam" id="TIGR03677">
    <property type="entry name" value="eL8_ribo"/>
    <property type="match status" value="1"/>
</dbReference>
<dbReference type="PANTHER" id="PTHR23105">
    <property type="entry name" value="RIBOSOMAL PROTEIN L7AE FAMILY MEMBER"/>
    <property type="match status" value="1"/>
</dbReference>
<dbReference type="Pfam" id="PF01248">
    <property type="entry name" value="Ribosomal_L7Ae"/>
    <property type="match status" value="1"/>
</dbReference>
<dbReference type="PRINTS" id="PR00881">
    <property type="entry name" value="L7ARS6FAMILY"/>
</dbReference>
<dbReference type="PRINTS" id="PR00884">
    <property type="entry name" value="RIBOSOMALHS6"/>
</dbReference>
<dbReference type="SUPFAM" id="SSF55315">
    <property type="entry name" value="L30e-like"/>
    <property type="match status" value="1"/>
</dbReference>
<dbReference type="PROSITE" id="PS01082">
    <property type="entry name" value="RIBOSOMAL_L7AE"/>
    <property type="match status" value="1"/>
</dbReference>
<accession>P55858</accession>
<proteinExistence type="evidence at protein level"/>